<keyword id="KW-0030">Aminoacyl-tRNA synthetase</keyword>
<keyword id="KW-0067">ATP-binding</keyword>
<keyword id="KW-0963">Cytoplasm</keyword>
<keyword id="KW-0436">Ligase</keyword>
<keyword id="KW-0547">Nucleotide-binding</keyword>
<keyword id="KW-0648">Protein biosynthesis</keyword>
<organism>
    <name type="scientific">Marinomonas sp. (strain MWYL1)</name>
    <dbReference type="NCBI Taxonomy" id="400668"/>
    <lineage>
        <taxon>Bacteria</taxon>
        <taxon>Pseudomonadati</taxon>
        <taxon>Pseudomonadota</taxon>
        <taxon>Gammaproteobacteria</taxon>
        <taxon>Oceanospirillales</taxon>
        <taxon>Oceanospirillaceae</taxon>
        <taxon>Marinomonas</taxon>
    </lineage>
</organism>
<dbReference type="EC" id="6.1.1.23" evidence="1"/>
<dbReference type="EMBL" id="CP000749">
    <property type="protein sequence ID" value="ABR71109.1"/>
    <property type="molecule type" value="Genomic_DNA"/>
</dbReference>
<dbReference type="SMR" id="A6VXD0"/>
<dbReference type="STRING" id="400668.Mmwyl1_2187"/>
<dbReference type="KEGG" id="mmw:Mmwyl1_2187"/>
<dbReference type="eggNOG" id="COG0173">
    <property type="taxonomic scope" value="Bacteria"/>
</dbReference>
<dbReference type="HOGENOM" id="CLU_014330_3_2_6"/>
<dbReference type="OrthoDB" id="9802326at2"/>
<dbReference type="GO" id="GO:0005737">
    <property type="term" value="C:cytoplasm"/>
    <property type="evidence" value="ECO:0007669"/>
    <property type="project" value="UniProtKB-SubCell"/>
</dbReference>
<dbReference type="GO" id="GO:0004815">
    <property type="term" value="F:aspartate-tRNA ligase activity"/>
    <property type="evidence" value="ECO:0007669"/>
    <property type="project" value="UniProtKB-UniRule"/>
</dbReference>
<dbReference type="GO" id="GO:0050560">
    <property type="term" value="F:aspartate-tRNA(Asn) ligase activity"/>
    <property type="evidence" value="ECO:0007669"/>
    <property type="project" value="UniProtKB-EC"/>
</dbReference>
<dbReference type="GO" id="GO:0005524">
    <property type="term" value="F:ATP binding"/>
    <property type="evidence" value="ECO:0007669"/>
    <property type="project" value="UniProtKB-UniRule"/>
</dbReference>
<dbReference type="GO" id="GO:0003676">
    <property type="term" value="F:nucleic acid binding"/>
    <property type="evidence" value="ECO:0007669"/>
    <property type="project" value="InterPro"/>
</dbReference>
<dbReference type="GO" id="GO:0006422">
    <property type="term" value="P:aspartyl-tRNA aminoacylation"/>
    <property type="evidence" value="ECO:0007669"/>
    <property type="project" value="UniProtKB-UniRule"/>
</dbReference>
<dbReference type="CDD" id="cd00777">
    <property type="entry name" value="AspRS_core"/>
    <property type="match status" value="1"/>
</dbReference>
<dbReference type="CDD" id="cd04317">
    <property type="entry name" value="EcAspRS_like_N"/>
    <property type="match status" value="1"/>
</dbReference>
<dbReference type="Gene3D" id="3.30.930.10">
    <property type="entry name" value="Bira Bifunctional Protein, Domain 2"/>
    <property type="match status" value="1"/>
</dbReference>
<dbReference type="Gene3D" id="3.30.1360.30">
    <property type="entry name" value="GAD-like domain"/>
    <property type="match status" value="1"/>
</dbReference>
<dbReference type="Gene3D" id="2.40.50.140">
    <property type="entry name" value="Nucleic acid-binding proteins"/>
    <property type="match status" value="1"/>
</dbReference>
<dbReference type="HAMAP" id="MF_00044">
    <property type="entry name" value="Asp_tRNA_synth_type1"/>
    <property type="match status" value="1"/>
</dbReference>
<dbReference type="InterPro" id="IPR004364">
    <property type="entry name" value="Aa-tRNA-synt_II"/>
</dbReference>
<dbReference type="InterPro" id="IPR006195">
    <property type="entry name" value="aa-tRNA-synth_II"/>
</dbReference>
<dbReference type="InterPro" id="IPR045864">
    <property type="entry name" value="aa-tRNA-synth_II/BPL/LPL"/>
</dbReference>
<dbReference type="InterPro" id="IPR004524">
    <property type="entry name" value="Asp-tRNA-ligase_1"/>
</dbReference>
<dbReference type="InterPro" id="IPR047089">
    <property type="entry name" value="Asp-tRNA-ligase_1_N"/>
</dbReference>
<dbReference type="InterPro" id="IPR002312">
    <property type="entry name" value="Asp/Asn-tRNA-synth_IIb"/>
</dbReference>
<dbReference type="InterPro" id="IPR047090">
    <property type="entry name" value="AspRS_core"/>
</dbReference>
<dbReference type="InterPro" id="IPR004115">
    <property type="entry name" value="GAD-like_sf"/>
</dbReference>
<dbReference type="InterPro" id="IPR029351">
    <property type="entry name" value="GAD_dom"/>
</dbReference>
<dbReference type="InterPro" id="IPR012340">
    <property type="entry name" value="NA-bd_OB-fold"/>
</dbReference>
<dbReference type="InterPro" id="IPR004365">
    <property type="entry name" value="NA-bd_OB_tRNA"/>
</dbReference>
<dbReference type="NCBIfam" id="TIGR00459">
    <property type="entry name" value="aspS_bact"/>
    <property type="match status" value="1"/>
</dbReference>
<dbReference type="NCBIfam" id="NF001750">
    <property type="entry name" value="PRK00476.1"/>
    <property type="match status" value="1"/>
</dbReference>
<dbReference type="PANTHER" id="PTHR22594:SF5">
    <property type="entry name" value="ASPARTATE--TRNA LIGASE, MITOCHONDRIAL"/>
    <property type="match status" value="1"/>
</dbReference>
<dbReference type="PANTHER" id="PTHR22594">
    <property type="entry name" value="ASPARTYL/LYSYL-TRNA SYNTHETASE"/>
    <property type="match status" value="1"/>
</dbReference>
<dbReference type="Pfam" id="PF02938">
    <property type="entry name" value="GAD"/>
    <property type="match status" value="1"/>
</dbReference>
<dbReference type="Pfam" id="PF00152">
    <property type="entry name" value="tRNA-synt_2"/>
    <property type="match status" value="1"/>
</dbReference>
<dbReference type="Pfam" id="PF01336">
    <property type="entry name" value="tRNA_anti-codon"/>
    <property type="match status" value="1"/>
</dbReference>
<dbReference type="PRINTS" id="PR01042">
    <property type="entry name" value="TRNASYNTHASP"/>
</dbReference>
<dbReference type="SUPFAM" id="SSF55681">
    <property type="entry name" value="Class II aaRS and biotin synthetases"/>
    <property type="match status" value="1"/>
</dbReference>
<dbReference type="SUPFAM" id="SSF55261">
    <property type="entry name" value="GAD domain-like"/>
    <property type="match status" value="1"/>
</dbReference>
<dbReference type="SUPFAM" id="SSF50249">
    <property type="entry name" value="Nucleic acid-binding proteins"/>
    <property type="match status" value="1"/>
</dbReference>
<dbReference type="PROSITE" id="PS50862">
    <property type="entry name" value="AA_TRNA_LIGASE_II"/>
    <property type="match status" value="1"/>
</dbReference>
<feature type="chain" id="PRO_1000074708" description="Aspartate--tRNA(Asp/Asn) ligase">
    <location>
        <begin position="1"/>
        <end position="590"/>
    </location>
</feature>
<feature type="region of interest" description="Aspartate" evidence="1">
    <location>
        <begin position="197"/>
        <end position="200"/>
    </location>
</feature>
<feature type="binding site" evidence="1">
    <location>
        <position position="173"/>
    </location>
    <ligand>
        <name>L-aspartate</name>
        <dbReference type="ChEBI" id="CHEBI:29991"/>
    </ligand>
</feature>
<feature type="binding site" evidence="1">
    <location>
        <begin position="219"/>
        <end position="221"/>
    </location>
    <ligand>
        <name>ATP</name>
        <dbReference type="ChEBI" id="CHEBI:30616"/>
    </ligand>
</feature>
<feature type="binding site" evidence="1">
    <location>
        <position position="219"/>
    </location>
    <ligand>
        <name>L-aspartate</name>
        <dbReference type="ChEBI" id="CHEBI:29991"/>
    </ligand>
</feature>
<feature type="binding site" evidence="1">
    <location>
        <position position="228"/>
    </location>
    <ligand>
        <name>ATP</name>
        <dbReference type="ChEBI" id="CHEBI:30616"/>
    </ligand>
</feature>
<feature type="binding site" evidence="1">
    <location>
        <position position="449"/>
    </location>
    <ligand>
        <name>L-aspartate</name>
        <dbReference type="ChEBI" id="CHEBI:29991"/>
    </ligand>
</feature>
<feature type="binding site" evidence="1">
    <location>
        <position position="482"/>
    </location>
    <ligand>
        <name>ATP</name>
        <dbReference type="ChEBI" id="CHEBI:30616"/>
    </ligand>
</feature>
<feature type="binding site" evidence="1">
    <location>
        <position position="489"/>
    </location>
    <ligand>
        <name>L-aspartate</name>
        <dbReference type="ChEBI" id="CHEBI:29991"/>
    </ligand>
</feature>
<feature type="binding site" evidence="1">
    <location>
        <begin position="534"/>
        <end position="537"/>
    </location>
    <ligand>
        <name>ATP</name>
        <dbReference type="ChEBI" id="CHEBI:30616"/>
    </ligand>
</feature>
<feature type="site" description="Important for tRNA non-discrimination" evidence="1">
    <location>
        <position position="30"/>
    </location>
</feature>
<feature type="site" description="Important for tRNA non-discrimination" evidence="1">
    <location>
        <position position="81"/>
    </location>
</feature>
<reference key="1">
    <citation type="submission" date="2007-06" db="EMBL/GenBank/DDBJ databases">
        <title>Complete sequence of Marinomonas sp. MWYL1.</title>
        <authorList>
            <consortium name="US DOE Joint Genome Institute"/>
            <person name="Copeland A."/>
            <person name="Lucas S."/>
            <person name="Lapidus A."/>
            <person name="Barry K."/>
            <person name="Glavina del Rio T."/>
            <person name="Dalin E."/>
            <person name="Tice H."/>
            <person name="Pitluck S."/>
            <person name="Kiss H."/>
            <person name="Brettin T."/>
            <person name="Bruce D."/>
            <person name="Detter J.C."/>
            <person name="Han C."/>
            <person name="Schmutz J."/>
            <person name="Larimer F."/>
            <person name="Land M."/>
            <person name="Hauser L."/>
            <person name="Kyrpides N."/>
            <person name="Kim E."/>
            <person name="Johnston A.W.B."/>
            <person name="Todd J.D."/>
            <person name="Rogers R."/>
            <person name="Wexler M."/>
            <person name="Bond P.L."/>
            <person name="Li Y."/>
            <person name="Richardson P."/>
        </authorList>
    </citation>
    <scope>NUCLEOTIDE SEQUENCE [LARGE SCALE GENOMIC DNA]</scope>
    <source>
        <strain>MWYL1</strain>
    </source>
</reference>
<gene>
    <name evidence="1" type="primary">aspS</name>
    <name type="ordered locus">Mmwyl1_2187</name>
</gene>
<protein>
    <recommendedName>
        <fullName evidence="1">Aspartate--tRNA(Asp/Asn) ligase</fullName>
        <ecNumber evidence="1">6.1.1.23</ecNumber>
    </recommendedName>
    <alternativeName>
        <fullName evidence="1">Aspartyl-tRNA synthetase</fullName>
        <shortName evidence="1">AspRS</shortName>
    </alternativeName>
    <alternativeName>
        <fullName evidence="1">Non-discriminating aspartyl-tRNA synthetase</fullName>
        <shortName evidence="1">ND-AspRS</shortName>
    </alternativeName>
</protein>
<accession>A6VXD0</accession>
<comment type="function">
    <text evidence="1">Aspartyl-tRNA synthetase with relaxed tRNA specificity since it is able to aspartylate not only its cognate tRNA(Asp) but also tRNA(Asn). Reaction proceeds in two steps: L-aspartate is first activated by ATP to form Asp-AMP and then transferred to the acceptor end of tRNA(Asp/Asn).</text>
</comment>
<comment type="catalytic activity">
    <reaction evidence="1">
        <text>tRNA(Asx) + L-aspartate + ATP = L-aspartyl-tRNA(Asx) + AMP + diphosphate</text>
        <dbReference type="Rhea" id="RHEA:18349"/>
        <dbReference type="Rhea" id="RHEA-COMP:9710"/>
        <dbReference type="Rhea" id="RHEA-COMP:9711"/>
        <dbReference type="ChEBI" id="CHEBI:29991"/>
        <dbReference type="ChEBI" id="CHEBI:30616"/>
        <dbReference type="ChEBI" id="CHEBI:33019"/>
        <dbReference type="ChEBI" id="CHEBI:78442"/>
        <dbReference type="ChEBI" id="CHEBI:78516"/>
        <dbReference type="ChEBI" id="CHEBI:456215"/>
        <dbReference type="EC" id="6.1.1.23"/>
    </reaction>
</comment>
<comment type="subunit">
    <text evidence="1">Homodimer.</text>
</comment>
<comment type="subcellular location">
    <subcellularLocation>
        <location evidence="1">Cytoplasm</location>
    </subcellularLocation>
</comment>
<comment type="similarity">
    <text evidence="1">Belongs to the class-II aminoacyl-tRNA synthetase family. Type 1 subfamily.</text>
</comment>
<sequence>MRSHYCGELNASNISQEITLCGWVHRRRDHGGVIFLDVRDREGITQVVFDPDRAESFALADSVRNEFVVKLKGLVRARPEGTVNPNMNTGEIEVLGTELEILNAAKTPPFQLDEHQSVGEDVRLKNRFIDLRRPEIQQKMRFRSKVTSVLRRYLDGNGFLDIETPILTRATPEGARDYLVPSRTQQGSFFALPQSPQLFKQLLMVSGFDRYYQIAKCFRDEDLRADRQPEFTQVDIETSFMSEQEIMAMTEEMIVGLFKELMDIDLGTFPRMPYSEAMETYGSDKPDLRIPLTIVTVSDLMAGVDFKVFSGPATDPKGRVAALKVPGGNALTRKQIDDYTKFVSIYGAKGLAYIKVNDKSNLEEGLQSPIVKFLPVEVRAALLERLEAEDGDLIFFGADSAKIVNEALGALRCKLGDDLNLYTCKWAPLWVVDFPMFEETSDGGITAIHHPFTAPSCSPENLKASPLTALSQAYDMVLNGTELGGGSIRIHQSSMQETVFELLNITKEEQEEKFGFLLDALKFGAPPHGGLAFGLDRLVMLMTGSSSIRDVIAFPKTQSATCLLTQAPGEVSEKQLKELNIRIRKPVVES</sequence>
<evidence type="ECO:0000255" key="1">
    <source>
        <dbReference type="HAMAP-Rule" id="MF_00044"/>
    </source>
</evidence>
<name>SYDND_MARMS</name>
<proteinExistence type="inferred from homology"/>